<name>YELL_DROSI</name>
<reference key="1">
    <citation type="journal article" date="2001" name="Mol. Biol. Evol.">
        <title>Changes in the recombinational environment affect divergence in the yellow gene of Drosophila.</title>
        <authorList>
            <person name="Munte A.B."/>
            <person name="Aguade M."/>
            <person name="Segarra C."/>
        </authorList>
    </citation>
    <scope>NUCLEOTIDE SEQUENCE [GENOMIC DNA]</scope>
</reference>
<proteinExistence type="inferred from homology"/>
<protein>
    <recommendedName>
        <fullName>Protein yellow</fullName>
    </recommendedName>
</protein>
<keyword id="KW-0325">Glycoprotein</keyword>
<keyword id="KW-0964">Secreted</keyword>
<keyword id="KW-0732">Signal</keyword>
<evidence type="ECO:0000250" key="1"/>
<evidence type="ECO:0000255" key="2"/>
<evidence type="ECO:0000256" key="3">
    <source>
        <dbReference type="SAM" id="MobiDB-lite"/>
    </source>
</evidence>
<evidence type="ECO:0000305" key="4"/>
<organism>
    <name type="scientific">Drosophila simulans</name>
    <name type="common">Fruit fly</name>
    <dbReference type="NCBI Taxonomy" id="7240"/>
    <lineage>
        <taxon>Eukaryota</taxon>
        <taxon>Metazoa</taxon>
        <taxon>Ecdysozoa</taxon>
        <taxon>Arthropoda</taxon>
        <taxon>Hexapoda</taxon>
        <taxon>Insecta</taxon>
        <taxon>Pterygota</taxon>
        <taxon>Neoptera</taxon>
        <taxon>Endopterygota</taxon>
        <taxon>Diptera</taxon>
        <taxon>Brachycera</taxon>
        <taxon>Muscomorpha</taxon>
        <taxon>Ephydroidea</taxon>
        <taxon>Drosophilidae</taxon>
        <taxon>Drosophila</taxon>
        <taxon>Sophophora</taxon>
    </lineage>
</organism>
<feature type="signal peptide" evidence="2">
    <location>
        <begin position="1"/>
        <end position="21"/>
    </location>
</feature>
<feature type="chain" id="PRO_0000031054" description="Protein yellow">
    <location>
        <begin position="22"/>
        <end position="541"/>
    </location>
</feature>
<feature type="region of interest" description="Disordered" evidence="3">
    <location>
        <begin position="443"/>
        <end position="463"/>
    </location>
</feature>
<feature type="glycosylation site" description="N-linked (GlcNAc...) asparagine" evidence="2">
    <location>
        <position position="144"/>
    </location>
</feature>
<feature type="glycosylation site" description="N-linked (GlcNAc...) asparagine" evidence="2">
    <location>
        <position position="215"/>
    </location>
</feature>
<dbReference type="EMBL" id="AJ300668">
    <property type="protein sequence ID" value="CAC34738.1"/>
    <property type="molecule type" value="Genomic_DNA"/>
</dbReference>
<dbReference type="SMR" id="P62407"/>
<dbReference type="GlyCosmos" id="P62407">
    <property type="glycosylation" value="2 sites, No reported glycans"/>
</dbReference>
<dbReference type="EnsemblMetazoa" id="FBtr0358744">
    <property type="protein sequence ID" value="FBpp0322723"/>
    <property type="gene ID" value="FBgn0012903"/>
</dbReference>
<dbReference type="EnsemblMetazoa" id="XM_016180986.3">
    <property type="protein sequence ID" value="XP_016037524.1"/>
    <property type="gene ID" value="LOC6739897"/>
</dbReference>
<dbReference type="GeneID" id="6739897"/>
<dbReference type="KEGG" id="dsi:Dsimw501_GD24705"/>
<dbReference type="CTD" id="30980"/>
<dbReference type="OrthoDB" id="7776143at2759"/>
<dbReference type="Bgee" id="FBgn0012903">
    <property type="expression patterns" value="Expressed in embryo and 2 other cell types or tissues"/>
</dbReference>
<dbReference type="GO" id="GO:0070451">
    <property type="term" value="C:cell hair"/>
    <property type="evidence" value="ECO:0007669"/>
    <property type="project" value="EnsemblMetazoa"/>
</dbReference>
<dbReference type="GO" id="GO:0005737">
    <property type="term" value="C:cytoplasm"/>
    <property type="evidence" value="ECO:0007669"/>
    <property type="project" value="EnsemblMetazoa"/>
</dbReference>
<dbReference type="GO" id="GO:0005576">
    <property type="term" value="C:extracellular region"/>
    <property type="evidence" value="ECO:0007669"/>
    <property type="project" value="UniProtKB-SubCell"/>
</dbReference>
<dbReference type="GO" id="GO:0048067">
    <property type="term" value="P:cuticle pigmentation"/>
    <property type="evidence" value="ECO:0007669"/>
    <property type="project" value="EnsemblMetazoa"/>
</dbReference>
<dbReference type="GO" id="GO:0048065">
    <property type="term" value="P:male courtship behavior, veined wing extension"/>
    <property type="evidence" value="ECO:0007669"/>
    <property type="project" value="EnsemblMetazoa"/>
</dbReference>
<dbReference type="GO" id="GO:0042438">
    <property type="term" value="P:melanin biosynthetic process"/>
    <property type="evidence" value="ECO:0007669"/>
    <property type="project" value="EnsemblMetazoa"/>
</dbReference>
<dbReference type="GO" id="GO:0048082">
    <property type="term" value="P:regulation of adult chitin-containing cuticle pigmentation"/>
    <property type="evidence" value="ECO:0007669"/>
    <property type="project" value="EnsemblMetazoa"/>
</dbReference>
<dbReference type="FunFam" id="2.120.10.30:FF:000046">
    <property type="entry name" value="Blast:Protein yellow"/>
    <property type="match status" value="1"/>
</dbReference>
<dbReference type="Gene3D" id="2.120.10.30">
    <property type="entry name" value="TolB, C-terminal domain"/>
    <property type="match status" value="1"/>
</dbReference>
<dbReference type="InterPro" id="IPR011042">
    <property type="entry name" value="6-blade_b-propeller_TolB-like"/>
</dbReference>
<dbReference type="InterPro" id="IPR017996">
    <property type="entry name" value="Royal_jelly/protein_yellow"/>
</dbReference>
<dbReference type="PANTHER" id="PTHR10009:SF14">
    <property type="entry name" value="PROTEIN YELLOW"/>
    <property type="match status" value="1"/>
</dbReference>
<dbReference type="PANTHER" id="PTHR10009">
    <property type="entry name" value="PROTEIN YELLOW-RELATED"/>
    <property type="match status" value="1"/>
</dbReference>
<dbReference type="Pfam" id="PF03022">
    <property type="entry name" value="MRJP"/>
    <property type="match status" value="1"/>
</dbReference>
<dbReference type="PRINTS" id="PR01366">
    <property type="entry name" value="ROYALJELLY"/>
</dbReference>
<sequence length="541" mass="60603">MFQDKGWILVTLITLVTPSWAAYKLQERYSWNQLDFAFPNTRLKDQALASGDYIPQNALPVGVEHFGNRLFVTVPRWRDGIPATLTYINMDRSLTGSPELIPYPDWRSNTAGDCANSITTAYRIKVDECGRLWVLDTGTVGIGNTTTNPCPYAVNVFDLTTDTRIRRYELPGVDTNPNTFIANIAVDIGKNCDDAYAYFADELGYGLIAYSWELNKSWRFSAHSYFFPDPLRGDFNVAGINFQWGEEGIFGMSLSPIRSDGYRTLYFSPLASHRQFAVSTRILRDETRTEDSYHDFVALDERGPNSHTTSRVMSDDGIELFNLIDQNAVGCWHSSMPYSPQFHGIVDRDDVGLVFPADVKIDENKNVWVLSDRMPVFLLSDLDYSDTNFRIYTAPLATLIENTVCDLRNNAYGPPNTVSIPKQAVLPMGPPLYTKQYRPLLPQKPQTSWASSPPPPSRTYLPANSGNVVSSISVSTNSVGPAGVEVPKAYIFNQHNGINYETSGPHLFPTHQPAQPGVQDGGLKTYVNARQSGWWHHQHQG</sequence>
<gene>
    <name type="primary">y</name>
</gene>
<accession>P62407</accession>
<accession>Q9BH20</accession>
<comment type="function">
    <text evidence="1">Controls the pigmentation pattern of the adult cuticle and larval mouth parts.</text>
</comment>
<comment type="subcellular location">
    <subcellularLocation>
        <location>Secreted</location>
    </subcellularLocation>
</comment>
<comment type="similarity">
    <text evidence="4">Belongs to the major royal jelly protein family.</text>
</comment>